<keyword id="KW-0496">Mitochondrion</keyword>
<keyword id="KW-1185">Reference proteome</keyword>
<keyword id="KW-0687">Ribonucleoprotein</keyword>
<keyword id="KW-0689">Ribosomal protein</keyword>
<keyword id="KW-0809">Transit peptide</keyword>
<reference key="1">
    <citation type="journal article" date="2003" name="PLoS Biol.">
        <title>The genome sequence of Caenorhabditis briggsae: a platform for comparative genomics.</title>
        <authorList>
            <person name="Stein L.D."/>
            <person name="Bao Z."/>
            <person name="Blasiar D."/>
            <person name="Blumenthal T."/>
            <person name="Brent M.R."/>
            <person name="Chen N."/>
            <person name="Chinwalla A."/>
            <person name="Clarke L."/>
            <person name="Clee C."/>
            <person name="Coghlan A."/>
            <person name="Coulson A."/>
            <person name="D'Eustachio P."/>
            <person name="Fitch D.H.A."/>
            <person name="Fulton L.A."/>
            <person name="Fulton R.E."/>
            <person name="Griffiths-Jones S."/>
            <person name="Harris T.W."/>
            <person name="Hillier L.W."/>
            <person name="Kamath R."/>
            <person name="Kuwabara P.E."/>
            <person name="Mardis E.R."/>
            <person name="Marra M.A."/>
            <person name="Miner T.L."/>
            <person name="Minx P."/>
            <person name="Mullikin J.C."/>
            <person name="Plumb R.W."/>
            <person name="Rogers J."/>
            <person name="Schein J.E."/>
            <person name="Sohrmann M."/>
            <person name="Spieth J."/>
            <person name="Stajich J.E."/>
            <person name="Wei C."/>
            <person name="Willey D."/>
            <person name="Wilson R.K."/>
            <person name="Durbin R.M."/>
            <person name="Waterston R.H."/>
        </authorList>
    </citation>
    <scope>NUCLEOTIDE SEQUENCE [LARGE SCALE GENOMIC DNA]</scope>
    <source>
        <strain>AF16</strain>
    </source>
</reference>
<comment type="subunit">
    <text evidence="1">Component of the mitochondrial ribosome small subunit (28S) which comprises a 12S rRNA and about 30 distinct proteins.</text>
</comment>
<comment type="subcellular location">
    <subcellularLocation>
        <location evidence="1">Mitochondrion</location>
    </subcellularLocation>
</comment>
<comment type="similarity">
    <text evidence="3">Belongs to the universal ribosomal protein uS3 family.</text>
</comment>
<proteinExistence type="inferred from homology"/>
<accession>Q61T16</accession>
<accession>A8X199</accession>
<name>RT24_CAEBR</name>
<dbReference type="EMBL" id="HE600909">
    <property type="protein sequence ID" value="CAP26409.1"/>
    <property type="molecule type" value="Genomic_DNA"/>
</dbReference>
<dbReference type="SMR" id="Q61T16"/>
<dbReference type="FunCoup" id="Q61T16">
    <property type="interactions" value="852"/>
</dbReference>
<dbReference type="STRING" id="6238.Q61T16"/>
<dbReference type="EnsemblMetazoa" id="CBG05943.1">
    <property type="protein sequence ID" value="CBG05943.1"/>
    <property type="gene ID" value="WBGene00028299"/>
</dbReference>
<dbReference type="KEGG" id="cbr:CBG_05943"/>
<dbReference type="CTD" id="8575221"/>
<dbReference type="WormBase" id="CBG05943">
    <property type="protein sequence ID" value="CBP15432"/>
    <property type="gene ID" value="WBGene00028299"/>
    <property type="gene designation" value="Cbr-mrps-24"/>
</dbReference>
<dbReference type="eggNOG" id="ENOG502RXU1">
    <property type="taxonomic scope" value="Eukaryota"/>
</dbReference>
<dbReference type="HOGENOM" id="CLU_134150_1_0_1"/>
<dbReference type="InParanoid" id="Q61T16"/>
<dbReference type="OMA" id="FLQGYTE"/>
<dbReference type="OrthoDB" id="5950413at2759"/>
<dbReference type="Proteomes" id="UP000008549">
    <property type="component" value="Unassembled WGS sequence"/>
</dbReference>
<dbReference type="GO" id="GO:0005763">
    <property type="term" value="C:mitochondrial small ribosomal subunit"/>
    <property type="evidence" value="ECO:0000250"/>
    <property type="project" value="UniProtKB"/>
</dbReference>
<dbReference type="GO" id="GO:0003735">
    <property type="term" value="F:structural constituent of ribosome"/>
    <property type="evidence" value="ECO:0000250"/>
    <property type="project" value="UniProtKB"/>
</dbReference>
<dbReference type="GO" id="GO:0032543">
    <property type="term" value="P:mitochondrial translation"/>
    <property type="evidence" value="ECO:0000250"/>
    <property type="project" value="UniProtKB"/>
</dbReference>
<dbReference type="InterPro" id="IPR026146">
    <property type="entry name" value="Ribosomal_uS3m"/>
</dbReference>
<dbReference type="PANTHER" id="PTHR21244">
    <property type="entry name" value="MITOCHONDRIAL 28S RIBOSOMAL PROTEIN S24"/>
    <property type="match status" value="1"/>
</dbReference>
<dbReference type="PANTHER" id="PTHR21244:SF1">
    <property type="entry name" value="SMALL RIBOSOMAL SUBUNIT PROTEIN US3M"/>
    <property type="match status" value="1"/>
</dbReference>
<dbReference type="Pfam" id="PF14955">
    <property type="entry name" value="MRP-S24"/>
    <property type="match status" value="1"/>
</dbReference>
<gene>
    <name type="primary">mrps-24</name>
    <name type="ORF">CBG05943</name>
</gene>
<evidence type="ECO:0000250" key="1">
    <source>
        <dbReference type="UniProtKB" id="Q2M2T7"/>
    </source>
</evidence>
<evidence type="ECO:0000255" key="2"/>
<evidence type="ECO:0000305" key="3"/>
<organism>
    <name type="scientific">Caenorhabditis briggsae</name>
    <dbReference type="NCBI Taxonomy" id="6238"/>
    <lineage>
        <taxon>Eukaryota</taxon>
        <taxon>Metazoa</taxon>
        <taxon>Ecdysozoa</taxon>
        <taxon>Nematoda</taxon>
        <taxon>Chromadorea</taxon>
        <taxon>Rhabditida</taxon>
        <taxon>Rhabditina</taxon>
        <taxon>Rhabditomorpha</taxon>
        <taxon>Rhabditoidea</taxon>
        <taxon>Rhabditidae</taxon>
        <taxon>Peloderinae</taxon>
        <taxon>Caenorhabditis</taxon>
    </lineage>
</organism>
<sequence>MLRSLQHVESHINQCRRISTTSTLLKNRAGKTKSTSNRTQLLTYEMAQKPHHIGVRKSWLTWHSQNLEEFRQSQPLVVAQDEVVRRFIRGFFPQNLVVSGNEIVIKRRGNVLIVAGFLQYSRRLDIRRIYWMFGFAEEFLSILLKQPVKLELSFVESEETVAYNYI</sequence>
<protein>
    <recommendedName>
        <fullName evidence="3">Small ribosomal subunit protein uS3m</fullName>
    </recommendedName>
    <alternativeName>
        <fullName>28S ribosomal protein S24, mitochondrial</fullName>
        <shortName>MRP-S24</shortName>
        <shortName>S24mt</shortName>
    </alternativeName>
</protein>
<feature type="transit peptide" description="Mitochondrion" evidence="2">
    <location>
        <begin position="1"/>
        <end position="25"/>
    </location>
</feature>
<feature type="chain" id="PRO_0000273071" description="Small ribosomal subunit protein uS3m">
    <location>
        <begin position="26"/>
        <end position="166"/>
    </location>
</feature>